<sequence>MYLIFM</sequence>
<comment type="function">
    <text evidence="1">Leader peptide required for resistance to cladinose-containing macrolide antibiotics. In the presence of erythromycin (ERY) or azithromycin (AZI), binds antibiotic in the ribosomal polypeptide exit tunnel, inducing ribosomal stalling. The peptide inserts into a cavity in the tunnel, altering the positions of uracil-2584 and uracil-2485 of the 23S rRNA, which blocks recognition of the complex by release factors 1 and 2. The stalled ribosome inhibits formation of the downstream Rho-independent terminator, and thus promotes transcription of msrD.</text>
</comment>
<comment type="induction">
    <text evidence="1">Induced by erythromycin.</text>
</comment>
<keyword id="KW-0002">3D-structure</keyword>
<keyword id="KW-0291">Formylation</keyword>
<keyword id="KW-0428">Leader peptide</keyword>
<keyword id="KW-0804">Transcription</keyword>
<keyword id="KW-0805">Transcription regulation</keyword>
<feature type="chain" id="PRO_0000459684" description="Leader peptide MsrDL">
    <location>
        <begin position="1"/>
        <end position="6"/>
    </location>
</feature>
<feature type="modified residue" description="N-formylmethionine" evidence="3">
    <location>
        <position position="1"/>
    </location>
</feature>
<feature type="mutagenesis site" description="Partially reduces msrD expression." evidence="1">
    <original>Y</original>
    <variation>A</variation>
    <location>
        <position position="2"/>
    </location>
</feature>
<feature type="mutagenesis site" description="No longer induces msrD expression, reduced ribosome stalling." evidence="1">
    <original>L</original>
    <variation>A</variation>
    <location>
        <position position="3"/>
    </location>
</feature>
<feature type="mutagenesis site" description="No longer induces msrD expression, reduced ribosome stalling." evidence="1">
    <original>I</original>
    <variation>A</variation>
    <location>
        <position position="4"/>
    </location>
</feature>
<feature type="mutagenesis site" description="Strongly reduces msrD expression." evidence="1">
    <original>F</original>
    <variation>A</variation>
    <location>
        <position position="5"/>
    </location>
</feature>
<feature type="mutagenesis site" description="Strongly reduces msrD expression." evidence="1">
    <original>M</original>
    <variation>A</variation>
    <variation>MA</variation>
    <location>
        <position position="6"/>
    </location>
</feature>
<organism>
    <name type="scientific">Streptococcus pneumoniae</name>
    <dbReference type="NCBI Taxonomy" id="1313"/>
    <lineage>
        <taxon>Bacteria</taxon>
        <taxon>Bacillati</taxon>
        <taxon>Bacillota</taxon>
        <taxon>Bacilli</taxon>
        <taxon>Lactobacillales</taxon>
        <taxon>Streptococcaceae</taxon>
        <taxon>Streptococcus</taxon>
    </lineage>
</organism>
<dbReference type="EMBL" id="FR671415">
    <property type="status" value="NOT_ANNOTATED_CDS"/>
    <property type="molecule type" value="Genomic_DNA"/>
</dbReference>
<dbReference type="PDB" id="7Q4K">
    <property type="method" value="EM"/>
    <property type="resolution" value="3.00 A"/>
    <property type="chains" value="D1=1-6"/>
</dbReference>
<dbReference type="PDBsum" id="7Q4K"/>
<dbReference type="SMR" id="P0DX94"/>
<name>MSRDL_STREE</name>
<accession>P0DX94</accession>
<gene>
    <name evidence="2" type="primary">msrDL</name>
</gene>
<reference key="1">
    <citation type="journal article" date="2011" name="Science">
        <title>Rapid pneumococcal evolution in response to clinical interventions.</title>
        <authorList>
            <person name="Croucher N.J."/>
            <person name="Harris S.R."/>
            <person name="Fraser C."/>
            <person name="Quail M.A."/>
            <person name="Burton J."/>
            <person name="Van der Linden M."/>
            <person name="McGee L."/>
            <person name="Von Gottberg A."/>
            <person name="Song J.H."/>
            <person name="Ko K.S."/>
            <person name="Pichon B."/>
            <person name="Baker S."/>
            <person name="Parry C.M."/>
            <person name="Lambertsen L.M."/>
            <person name="Shahinas D."/>
            <person name="Pillai D.R."/>
            <person name="Mitchell T.J."/>
            <person name="Dougan G."/>
            <person name="Tomasz A."/>
            <person name="Klugman K.P."/>
            <person name="Parkhill J."/>
            <person name="Hanage W.P."/>
            <person name="Bentley S.D."/>
        </authorList>
    </citation>
    <scope>NUCLEOTIDE SEQUENCE [GENOMIC DNA]</scope>
    <source>
        <strain>23771</strain>
        <transposon>Tn916-type</transposon>
    </source>
</reference>
<reference key="2">
    <citation type="journal article" date="2023" name="Nat. Commun.">
        <title>Regulation of the macrolide resistance ABC-F translation factor MsrD.</title>
        <authorList>
            <person name="Fostier C.R."/>
            <person name="Ousalem F."/>
            <person name="Leroy E.C."/>
            <person name="Ngo S."/>
            <person name="Soufari H."/>
            <person name="Innis C.A."/>
            <person name="Hashem Y."/>
            <person name="Boel G."/>
        </authorList>
    </citation>
    <scope>STRUCTURE BY ELECTRON MICROSCOPY (3.00 ANGSTROMS) IN COMPLEX WITH 70S RIBOSOME</scope>
    <scope>FUNCTION</scope>
    <scope>INDUCTION BY ERYTHROMYCIN</scope>
    <scope>FORMYLATION AT MET-1</scope>
    <scope>MUTAGENESIS OF TYR-2; LEU-3; ILE-4; PHE-5 AND MET-6</scope>
    <source>
        <strain>23771</strain>
        <transposon>Tn916-type</transposon>
    </source>
</reference>
<protein>
    <recommendedName>
        <fullName evidence="2">Leader peptide MsrDL</fullName>
    </recommendedName>
</protein>
<evidence type="ECO:0000269" key="1">
    <source>
    </source>
</evidence>
<evidence type="ECO:0000303" key="2">
    <source>
    </source>
</evidence>
<evidence type="ECO:0000312" key="3">
    <source>
        <dbReference type="PDB" id="7Q4K"/>
    </source>
</evidence>
<proteinExistence type="evidence at protein level"/>